<feature type="chain" id="PRO_0000047910" description="DNA-directed RNA polymerase subunit beta">
    <location>
        <begin position="1"/>
        <end position="1228"/>
    </location>
</feature>
<dbReference type="EC" id="2.7.7.6" evidence="1"/>
<dbReference type="EMBL" id="AF150880">
    <property type="protein sequence ID" value="AAF73184.1"/>
    <property type="molecule type" value="Genomic_DNA"/>
</dbReference>
<dbReference type="SMR" id="Q9KK59"/>
<dbReference type="GO" id="GO:0000428">
    <property type="term" value="C:DNA-directed RNA polymerase complex"/>
    <property type="evidence" value="ECO:0007669"/>
    <property type="project" value="UniProtKB-KW"/>
</dbReference>
<dbReference type="GO" id="GO:0003677">
    <property type="term" value="F:DNA binding"/>
    <property type="evidence" value="ECO:0007669"/>
    <property type="project" value="UniProtKB-UniRule"/>
</dbReference>
<dbReference type="GO" id="GO:0003899">
    <property type="term" value="F:DNA-directed RNA polymerase activity"/>
    <property type="evidence" value="ECO:0007669"/>
    <property type="project" value="UniProtKB-UniRule"/>
</dbReference>
<dbReference type="GO" id="GO:0032549">
    <property type="term" value="F:ribonucleoside binding"/>
    <property type="evidence" value="ECO:0007669"/>
    <property type="project" value="InterPro"/>
</dbReference>
<dbReference type="GO" id="GO:0006351">
    <property type="term" value="P:DNA-templated transcription"/>
    <property type="evidence" value="ECO:0007669"/>
    <property type="project" value="UniProtKB-UniRule"/>
</dbReference>
<dbReference type="CDD" id="cd00653">
    <property type="entry name" value="RNA_pol_B_RPB2"/>
    <property type="match status" value="1"/>
</dbReference>
<dbReference type="Gene3D" id="2.40.50.100">
    <property type="match status" value="1"/>
</dbReference>
<dbReference type="Gene3D" id="2.40.50.150">
    <property type="match status" value="1"/>
</dbReference>
<dbReference type="Gene3D" id="3.90.1100.10">
    <property type="match status" value="2"/>
</dbReference>
<dbReference type="Gene3D" id="2.40.270.10">
    <property type="entry name" value="DNA-directed RNA polymerase, subunit 2, domain 6"/>
    <property type="match status" value="2"/>
</dbReference>
<dbReference type="Gene3D" id="3.90.1800.10">
    <property type="entry name" value="RNA polymerase alpha subunit dimerisation domain"/>
    <property type="match status" value="1"/>
</dbReference>
<dbReference type="Gene3D" id="3.90.1110.10">
    <property type="entry name" value="RNA polymerase Rpb2, domain 2"/>
    <property type="match status" value="1"/>
</dbReference>
<dbReference type="HAMAP" id="MF_01321">
    <property type="entry name" value="RNApol_bact_RpoB"/>
    <property type="match status" value="1"/>
</dbReference>
<dbReference type="InterPro" id="IPR019462">
    <property type="entry name" value="DNA-dir_RNA_pol_bsu_external_1"/>
</dbReference>
<dbReference type="InterPro" id="IPR015712">
    <property type="entry name" value="DNA-dir_RNA_pol_su2"/>
</dbReference>
<dbReference type="InterPro" id="IPR007120">
    <property type="entry name" value="DNA-dir_RNAP_su2_dom"/>
</dbReference>
<dbReference type="InterPro" id="IPR037033">
    <property type="entry name" value="DNA-dir_RNAP_su2_hyb_sf"/>
</dbReference>
<dbReference type="InterPro" id="IPR010243">
    <property type="entry name" value="RNA_pol_bsu_bac"/>
</dbReference>
<dbReference type="InterPro" id="IPR007121">
    <property type="entry name" value="RNA_pol_bsu_CS"/>
</dbReference>
<dbReference type="InterPro" id="IPR007644">
    <property type="entry name" value="RNA_pol_bsu_protrusion"/>
</dbReference>
<dbReference type="InterPro" id="IPR007642">
    <property type="entry name" value="RNA_pol_Rpb2_2"/>
</dbReference>
<dbReference type="InterPro" id="IPR037034">
    <property type="entry name" value="RNA_pol_Rpb2_2_sf"/>
</dbReference>
<dbReference type="InterPro" id="IPR007645">
    <property type="entry name" value="RNA_pol_Rpb2_3"/>
</dbReference>
<dbReference type="InterPro" id="IPR007641">
    <property type="entry name" value="RNA_pol_Rpb2_7"/>
</dbReference>
<dbReference type="InterPro" id="IPR014724">
    <property type="entry name" value="RNA_pol_RPB2_OB-fold"/>
</dbReference>
<dbReference type="NCBIfam" id="TIGR02013">
    <property type="entry name" value="rpoB"/>
    <property type="match status" value="1"/>
</dbReference>
<dbReference type="PANTHER" id="PTHR20856">
    <property type="entry name" value="DNA-DIRECTED RNA POLYMERASE I SUBUNIT 2"/>
    <property type="match status" value="1"/>
</dbReference>
<dbReference type="Pfam" id="PF04563">
    <property type="entry name" value="RNA_pol_Rpb2_1"/>
    <property type="match status" value="1"/>
</dbReference>
<dbReference type="Pfam" id="PF04561">
    <property type="entry name" value="RNA_pol_Rpb2_2"/>
    <property type="match status" value="2"/>
</dbReference>
<dbReference type="Pfam" id="PF04565">
    <property type="entry name" value="RNA_pol_Rpb2_3"/>
    <property type="match status" value="1"/>
</dbReference>
<dbReference type="Pfam" id="PF10385">
    <property type="entry name" value="RNA_pol_Rpb2_45"/>
    <property type="match status" value="1"/>
</dbReference>
<dbReference type="Pfam" id="PF00562">
    <property type="entry name" value="RNA_pol_Rpb2_6"/>
    <property type="match status" value="1"/>
</dbReference>
<dbReference type="Pfam" id="PF04560">
    <property type="entry name" value="RNA_pol_Rpb2_7"/>
    <property type="match status" value="1"/>
</dbReference>
<dbReference type="SUPFAM" id="SSF64484">
    <property type="entry name" value="beta and beta-prime subunits of DNA dependent RNA-polymerase"/>
    <property type="match status" value="1"/>
</dbReference>
<dbReference type="PROSITE" id="PS01166">
    <property type="entry name" value="RNA_POL_BETA"/>
    <property type="match status" value="1"/>
</dbReference>
<protein>
    <recommendedName>
        <fullName evidence="1">DNA-directed RNA polymerase subunit beta</fullName>
        <shortName evidence="1">RNAP subunit beta</shortName>
        <ecNumber evidence="1">2.7.7.6</ecNumber>
    </recommendedName>
    <alternativeName>
        <fullName evidence="1">RNA polymerase subunit beta</fullName>
    </alternativeName>
    <alternativeName>
        <fullName evidence="1">Transcriptase subunit beta</fullName>
    </alternativeName>
</protein>
<sequence length="1228" mass="137913">MHTRMQIRNRVNFGKITDLNLLPNLIYVQKKSFDWFLQSEVKDPTKRLNQGLEAVFRESFPIESPNNDMVMEYGHYVLGEPKRDPQECKDTDSSFAVPLKAVIRLIIKDTGEIREQVVYMGDLPVMTDHGTFIINGAERVVVSQLHRSPGIFFSYDQVRDTFSARVIPYRGSWLEFEMDNKGILVAKIDRKKKFPATLLVKAMGMGTNEEVLRLFYGSSKMKIAGANPKDLKRLIGRRTIADIINMETGEVMLDAGSKINEDNISILREMKVKEVDVIEFPKGKDNPVLINCLEKDGVNDYEDAVKKFHTIMRPGEPSTIENAEAELKRLFFSPKTFDLGIVGRYKINSKFEFNNPKEFSKADDRVLRKQDIIETVRYLVMLMSEAENYYPDDIDHLGNRRIRSVGELIANQLKLGFSRVERVIKERMTVQEPEQQTPQLLISIKPITAVINEFFGSSQLSQFMDQTNPLAELTHKRRLNALGPGGLSRDRAGFEVRDVHYSHYGRMCPIETPEGPNIGLILSMSSFARVNDYGFIETPYRLVKNGKVQKQVEYLTADKEEYHYMAQSNSTVDEKGEFTSKLISTRHRGDFPFRSPAEIQYMDLAPLQVVSVSTALIPFLEHDDANRALMGSNMQRQAVPLLTEEAPFVGTGMEARAAYDAGVCIVAKKDGVVSKVDATGVWIKEDQSKEIVHYPLIKFKKTNQGTCFNQKPNVSMLHTTTGGKVSKVSKERVEVTTPNGEKETHELLLSDEVQFHAVVKEGQEVGIGAPVAGQIIKGEKYGDFGQILQKGTVLANGPSTDAGYLALGRNVLVAFMPWEGYNFEDAILISERIIKDDVFSSIHIEEFEIQARETKLGQEQITRDIPNLSDKAFRDLDESGVIRVGAEVKPGDILVGMVTPKGETDLTPEYKLLHSIFGEKAKEVRDSSLRMPNGFEGTVIDIKRYSRETGDELAAGVEEMVKVYVARKRKLLVGDKMAGRHGNKGVVARVMAQEDMPYMEDGSPVDIVLNPLGVPSRMNLGQIFETQLGFAAKKLGINFETPVFDGASEGDVNDFCKKAGLPENSKFQLYDGRTGEKFINQVFCGYIYMLKLAHLVDDKIHARSTGPYSLVTQQPLGGKAQFGGQRLGEMEVWALEAYGASHTLQELLTIKSDDMLGRARIYEAIVKGIHSIKPGIPESFNVLVQELRGLALDIIIKDSEGLEVDISDYEDEFSKNKKKIKFETIENV</sequence>
<name>RPOB_LEPBI</name>
<comment type="function">
    <text evidence="1">DNA-dependent RNA polymerase catalyzes the transcription of DNA into RNA using the four ribonucleoside triphosphates as substrates.</text>
</comment>
<comment type="catalytic activity">
    <reaction evidence="1">
        <text>RNA(n) + a ribonucleoside 5'-triphosphate = RNA(n+1) + diphosphate</text>
        <dbReference type="Rhea" id="RHEA:21248"/>
        <dbReference type="Rhea" id="RHEA-COMP:14527"/>
        <dbReference type="Rhea" id="RHEA-COMP:17342"/>
        <dbReference type="ChEBI" id="CHEBI:33019"/>
        <dbReference type="ChEBI" id="CHEBI:61557"/>
        <dbReference type="ChEBI" id="CHEBI:140395"/>
        <dbReference type="EC" id="2.7.7.6"/>
    </reaction>
</comment>
<comment type="subunit">
    <text evidence="1">The RNAP catalytic core consists of 2 alpha, 1 beta, 1 beta' and 1 omega subunit. When a sigma factor is associated with the core the holoenzyme is formed, which can initiate transcription.</text>
</comment>
<comment type="similarity">
    <text evidence="1">Belongs to the RNA polymerase beta chain family.</text>
</comment>
<gene>
    <name evidence="1" type="primary">rpoB</name>
</gene>
<keyword id="KW-0240">DNA-directed RNA polymerase</keyword>
<keyword id="KW-0548">Nucleotidyltransferase</keyword>
<keyword id="KW-0804">Transcription</keyword>
<keyword id="KW-0808">Transferase</keyword>
<proteinExistence type="inferred from homology"/>
<evidence type="ECO:0000255" key="1">
    <source>
        <dbReference type="HAMAP-Rule" id="MF_01321"/>
    </source>
</evidence>
<accession>Q9KK59</accession>
<reference key="1">
    <citation type="journal article" date="2000" name="J. Clin. Microbiol.">
        <title>rpoB gene analysis as a novel strategy for identification of spirochetes from the genera Borrelia, Treponema, and Leptospira.</title>
        <authorList>
            <person name="Renesto P."/>
            <person name="Lorvellec-Guillon K."/>
            <person name="Drancourt M."/>
            <person name="Raoult D."/>
        </authorList>
    </citation>
    <scope>NUCLEOTIDE SEQUENCE [GENOMIC DNA]</scope>
    <source>
        <strain>Serovar Patoc</strain>
    </source>
</reference>
<organism>
    <name type="scientific">Leptospira biflexa</name>
    <dbReference type="NCBI Taxonomy" id="172"/>
    <lineage>
        <taxon>Bacteria</taxon>
        <taxon>Pseudomonadati</taxon>
        <taxon>Spirochaetota</taxon>
        <taxon>Spirochaetia</taxon>
        <taxon>Leptospirales</taxon>
        <taxon>Leptospiraceae</taxon>
        <taxon>Leptospira</taxon>
    </lineage>
</organism>